<gene>
    <name evidence="1" type="primary">recA</name>
</gene>
<sequence>MSDNKKQQALELALKQIEKQFGKGSIMKLGDGADHSIEAIPSGSIALDIALGIGGYPRGRIIEVYGPESSGKTTLTLHAMASAQKQGGTVAFIDAEHALDPNYAKALGVDLDNLVLSQPDTGEQALDIAEALIKSGSIDMIVIDSVAALVPEAEIAGDMSANHVGLQARMMSQAMRKMSGVISKSNVVAIFINQIREKVGVMFGNPETTPGGRALKFFSSVRLEIRRAEAIKQGSEMIGIKSNVKVVKSKVAPPLKTASIDIMYGTGISRSGEVLDLSVELNLVNKSGAWYNIGEEKLGQGRDNAKQYLEDKPELLNELEKKVRTHFKLTK</sequence>
<feature type="chain" id="PRO_0000122631" description="Protein RecA">
    <location>
        <begin position="1"/>
        <end position="331"/>
    </location>
</feature>
<feature type="binding site" evidence="1">
    <location>
        <begin position="66"/>
        <end position="73"/>
    </location>
    <ligand>
        <name>ATP</name>
        <dbReference type="ChEBI" id="CHEBI:30616"/>
    </ligand>
</feature>
<feature type="sequence variant" description="In strain: 8195.">
    <location>
        <begin position="295"/>
        <end position="331"/>
    </location>
</feature>
<protein>
    <recommendedName>
        <fullName evidence="1">Protein RecA</fullName>
    </recommendedName>
    <alternativeName>
        <fullName evidence="1">Recombinase A</fullName>
    </alternativeName>
</protein>
<name>RECA_ACHLA</name>
<evidence type="ECO:0000255" key="1">
    <source>
        <dbReference type="HAMAP-Rule" id="MF_00268"/>
    </source>
</evidence>
<keyword id="KW-0067">ATP-binding</keyword>
<keyword id="KW-0963">Cytoplasm</keyword>
<keyword id="KW-0227">DNA damage</keyword>
<keyword id="KW-0233">DNA recombination</keyword>
<keyword id="KW-0234">DNA repair</keyword>
<keyword id="KW-0238">DNA-binding</keyword>
<keyword id="KW-0547">Nucleotide-binding</keyword>
<keyword id="KW-0742">SOS response</keyword>
<proteinExistence type="inferred from homology"/>
<dbReference type="EMBL" id="M81465">
    <property type="protein sequence ID" value="AAB59011.1"/>
    <property type="molecule type" value="Genomic_DNA"/>
</dbReference>
<dbReference type="PIR" id="A42602">
    <property type="entry name" value="A42602"/>
</dbReference>
<dbReference type="SMR" id="P29225"/>
<dbReference type="GO" id="GO:0005829">
    <property type="term" value="C:cytosol"/>
    <property type="evidence" value="ECO:0007669"/>
    <property type="project" value="TreeGrafter"/>
</dbReference>
<dbReference type="GO" id="GO:0005524">
    <property type="term" value="F:ATP binding"/>
    <property type="evidence" value="ECO:0007669"/>
    <property type="project" value="UniProtKB-UniRule"/>
</dbReference>
<dbReference type="GO" id="GO:0016887">
    <property type="term" value="F:ATP hydrolysis activity"/>
    <property type="evidence" value="ECO:0007669"/>
    <property type="project" value="InterPro"/>
</dbReference>
<dbReference type="GO" id="GO:0140664">
    <property type="term" value="F:ATP-dependent DNA damage sensor activity"/>
    <property type="evidence" value="ECO:0007669"/>
    <property type="project" value="InterPro"/>
</dbReference>
<dbReference type="GO" id="GO:0003684">
    <property type="term" value="F:damaged DNA binding"/>
    <property type="evidence" value="ECO:0007669"/>
    <property type="project" value="UniProtKB-UniRule"/>
</dbReference>
<dbReference type="GO" id="GO:0003697">
    <property type="term" value="F:single-stranded DNA binding"/>
    <property type="evidence" value="ECO:0007669"/>
    <property type="project" value="UniProtKB-UniRule"/>
</dbReference>
<dbReference type="GO" id="GO:0006310">
    <property type="term" value="P:DNA recombination"/>
    <property type="evidence" value="ECO:0007669"/>
    <property type="project" value="UniProtKB-UniRule"/>
</dbReference>
<dbReference type="GO" id="GO:0006281">
    <property type="term" value="P:DNA repair"/>
    <property type="evidence" value="ECO:0007669"/>
    <property type="project" value="UniProtKB-UniRule"/>
</dbReference>
<dbReference type="GO" id="GO:0009432">
    <property type="term" value="P:SOS response"/>
    <property type="evidence" value="ECO:0007669"/>
    <property type="project" value="UniProtKB-UniRule"/>
</dbReference>
<dbReference type="CDD" id="cd00983">
    <property type="entry name" value="RecA"/>
    <property type="match status" value="1"/>
</dbReference>
<dbReference type="FunFam" id="3.40.50.300:FF:000087">
    <property type="entry name" value="Recombinase RecA"/>
    <property type="match status" value="1"/>
</dbReference>
<dbReference type="Gene3D" id="3.40.50.300">
    <property type="entry name" value="P-loop containing nucleotide triphosphate hydrolases"/>
    <property type="match status" value="1"/>
</dbReference>
<dbReference type="HAMAP" id="MF_00268">
    <property type="entry name" value="RecA"/>
    <property type="match status" value="1"/>
</dbReference>
<dbReference type="InterPro" id="IPR003593">
    <property type="entry name" value="AAA+_ATPase"/>
</dbReference>
<dbReference type="InterPro" id="IPR013765">
    <property type="entry name" value="DNA_recomb/repair_RecA"/>
</dbReference>
<dbReference type="InterPro" id="IPR020584">
    <property type="entry name" value="DNA_recomb/repair_RecA_CS"/>
</dbReference>
<dbReference type="InterPro" id="IPR027417">
    <property type="entry name" value="P-loop_NTPase"/>
</dbReference>
<dbReference type="InterPro" id="IPR049261">
    <property type="entry name" value="RecA-like_C"/>
</dbReference>
<dbReference type="InterPro" id="IPR049428">
    <property type="entry name" value="RecA-like_N"/>
</dbReference>
<dbReference type="InterPro" id="IPR020588">
    <property type="entry name" value="RecA_ATP-bd"/>
</dbReference>
<dbReference type="InterPro" id="IPR023400">
    <property type="entry name" value="RecA_C_sf"/>
</dbReference>
<dbReference type="InterPro" id="IPR020587">
    <property type="entry name" value="RecA_monomer-monomer_interface"/>
</dbReference>
<dbReference type="NCBIfam" id="TIGR02012">
    <property type="entry name" value="tigrfam_recA"/>
    <property type="match status" value="1"/>
</dbReference>
<dbReference type="PANTHER" id="PTHR45900:SF1">
    <property type="entry name" value="MITOCHONDRIAL DNA REPAIR PROTEIN RECA HOMOLOG-RELATED"/>
    <property type="match status" value="1"/>
</dbReference>
<dbReference type="PANTHER" id="PTHR45900">
    <property type="entry name" value="RECA"/>
    <property type="match status" value="1"/>
</dbReference>
<dbReference type="Pfam" id="PF00154">
    <property type="entry name" value="RecA"/>
    <property type="match status" value="1"/>
</dbReference>
<dbReference type="Pfam" id="PF21096">
    <property type="entry name" value="RecA_C"/>
    <property type="match status" value="1"/>
</dbReference>
<dbReference type="PRINTS" id="PR00142">
    <property type="entry name" value="RECA"/>
</dbReference>
<dbReference type="SMART" id="SM00382">
    <property type="entry name" value="AAA"/>
    <property type="match status" value="1"/>
</dbReference>
<dbReference type="SUPFAM" id="SSF52540">
    <property type="entry name" value="P-loop containing nucleoside triphosphate hydrolases"/>
    <property type="match status" value="1"/>
</dbReference>
<dbReference type="SUPFAM" id="SSF54752">
    <property type="entry name" value="RecA protein, C-terminal domain"/>
    <property type="match status" value="1"/>
</dbReference>
<dbReference type="PROSITE" id="PS00321">
    <property type="entry name" value="RECA_1"/>
    <property type="match status" value="1"/>
</dbReference>
<dbReference type="PROSITE" id="PS50162">
    <property type="entry name" value="RECA_2"/>
    <property type="match status" value="1"/>
</dbReference>
<dbReference type="PROSITE" id="PS50163">
    <property type="entry name" value="RECA_3"/>
    <property type="match status" value="1"/>
</dbReference>
<comment type="function">
    <text evidence="1">Can catalyze the hydrolysis of ATP in the presence of single-stranded DNA, the ATP-dependent uptake of single-stranded DNA by duplex DNA, and the ATP-dependent hybridization of homologous single-stranded DNAs. It interacts with LexA causing its activation and leading to its autocatalytic cleavage.</text>
</comment>
<comment type="subcellular location">
    <subcellularLocation>
        <location evidence="1">Cytoplasm</location>
    </subcellularLocation>
</comment>
<comment type="similarity">
    <text evidence="1">Belongs to the RecA family.</text>
</comment>
<organism>
    <name type="scientific">Acholeplasma laidlawii</name>
    <dbReference type="NCBI Taxonomy" id="2148"/>
    <lineage>
        <taxon>Bacteria</taxon>
        <taxon>Bacillati</taxon>
        <taxon>Mycoplasmatota</taxon>
        <taxon>Mollicutes</taxon>
        <taxon>Acholeplasmatales</taxon>
        <taxon>Acholeplasmataceae</taxon>
        <taxon>Acholeplasma</taxon>
    </lineage>
</organism>
<accession>P29225</accession>
<reference key="1">
    <citation type="journal article" date="1992" name="J. Bacteriol.">
        <title>Cloning and DNA sequence of a mycoplasmal recA gene.</title>
        <authorList>
            <person name="Dybvig K."/>
            <person name="Woodard A."/>
        </authorList>
    </citation>
    <scope>NUCLEOTIDE SEQUENCE [GENOMIC DNA]</scope>
    <source>
        <strain>8195</strain>
        <strain>JA1</strain>
        <strain>K2</strain>
    </source>
</reference>